<comment type="function">
    <text evidence="1">Binds to the 23S rRNA.</text>
</comment>
<comment type="subunit">
    <text evidence="1">Part of the 50S ribosomal subunit.</text>
</comment>
<comment type="similarity">
    <text evidence="1">Belongs to the universal ribosomal protein uL15 family.</text>
</comment>
<keyword id="KW-0687">Ribonucleoprotein</keyword>
<keyword id="KW-0689">Ribosomal protein</keyword>
<keyword id="KW-0694">RNA-binding</keyword>
<keyword id="KW-0699">rRNA-binding</keyword>
<gene>
    <name evidence="1" type="primary">rpl15</name>
    <name type="ordered locus">TV0351</name>
    <name type="ORF">TVG0343601</name>
</gene>
<evidence type="ECO:0000255" key="1">
    <source>
        <dbReference type="HAMAP-Rule" id="MF_01341"/>
    </source>
</evidence>
<evidence type="ECO:0000256" key="2">
    <source>
        <dbReference type="SAM" id="MobiDB-lite"/>
    </source>
</evidence>
<evidence type="ECO:0000305" key="3"/>
<name>RL15_THEVO</name>
<accession>Q97BV4</accession>
<reference key="1">
    <citation type="journal article" date="2000" name="Proc. Natl. Acad. Sci. U.S.A.">
        <title>Archaeal adaptation to higher temperatures revealed by genomic sequence of Thermoplasma volcanium.</title>
        <authorList>
            <person name="Kawashima T."/>
            <person name="Amano N."/>
            <person name="Koike H."/>
            <person name="Makino S."/>
            <person name="Higuchi S."/>
            <person name="Kawashima-Ohya Y."/>
            <person name="Watanabe K."/>
            <person name="Yamazaki M."/>
            <person name="Kanehori K."/>
            <person name="Kawamoto T."/>
            <person name="Nunoshiba T."/>
            <person name="Yamamoto Y."/>
            <person name="Aramaki H."/>
            <person name="Makino K."/>
            <person name="Suzuki M."/>
        </authorList>
    </citation>
    <scope>NUCLEOTIDE SEQUENCE [LARGE SCALE GENOMIC DNA]</scope>
    <source>
        <strain>ATCC 51530 / DSM 4299 / JCM 9571 / NBRC 15438 / GSS1</strain>
    </source>
</reference>
<organism>
    <name type="scientific">Thermoplasma volcanium (strain ATCC 51530 / DSM 4299 / JCM 9571 / NBRC 15438 / GSS1)</name>
    <dbReference type="NCBI Taxonomy" id="273116"/>
    <lineage>
        <taxon>Archaea</taxon>
        <taxon>Methanobacteriati</taxon>
        <taxon>Thermoplasmatota</taxon>
        <taxon>Thermoplasmata</taxon>
        <taxon>Thermoplasmatales</taxon>
        <taxon>Thermoplasmataceae</taxon>
        <taxon>Thermoplasma</taxon>
    </lineage>
</organism>
<proteinExistence type="inferred from homology"/>
<feature type="chain" id="PRO_0000104877" description="Large ribosomal subunit protein uL15">
    <location>
        <begin position="1"/>
        <end position="145"/>
    </location>
</feature>
<feature type="region of interest" description="Disordered" evidence="2">
    <location>
        <begin position="1"/>
        <end position="33"/>
    </location>
</feature>
<feature type="compositionally biased region" description="Basic residues" evidence="2">
    <location>
        <begin position="1"/>
        <end position="13"/>
    </location>
</feature>
<feature type="compositionally biased region" description="Basic residues" evidence="2">
    <location>
        <begin position="19"/>
        <end position="29"/>
    </location>
</feature>
<sequence length="145" mass="15767">MVRERTKKLRGGHYGRGMKAGRGKGKKGGRGNAGMGKHKWIWMVKYDPLHFGGKGFTSHHLSTPDVPINLGELENIFENLKADGFVREENGETVVDLKAAGYDKLLGSGNFSVKSRIIIDKATEKAISKLSAIGSKIENVGNTAE</sequence>
<protein>
    <recommendedName>
        <fullName evidence="1">Large ribosomal subunit protein uL15</fullName>
    </recommendedName>
    <alternativeName>
        <fullName evidence="3">50S ribosomal protein L15</fullName>
    </alternativeName>
</protein>
<dbReference type="EMBL" id="BA000011">
    <property type="protein sequence ID" value="BAB59493.1"/>
    <property type="molecule type" value="Genomic_DNA"/>
</dbReference>
<dbReference type="RefSeq" id="WP_010916605.1">
    <property type="nucleotide sequence ID" value="NC_002689.2"/>
</dbReference>
<dbReference type="SMR" id="Q97BV4"/>
<dbReference type="STRING" id="273116.gene:9381128"/>
<dbReference type="PaxDb" id="273116-14324566"/>
<dbReference type="GeneID" id="1440863"/>
<dbReference type="KEGG" id="tvo:TVG0343601"/>
<dbReference type="eggNOG" id="arCOG00779">
    <property type="taxonomic scope" value="Archaea"/>
</dbReference>
<dbReference type="HOGENOM" id="CLU_109163_0_0_2"/>
<dbReference type="OrthoDB" id="9418at2157"/>
<dbReference type="PhylomeDB" id="Q97BV4"/>
<dbReference type="Proteomes" id="UP000001017">
    <property type="component" value="Chromosome"/>
</dbReference>
<dbReference type="GO" id="GO:0022625">
    <property type="term" value="C:cytosolic large ribosomal subunit"/>
    <property type="evidence" value="ECO:0007669"/>
    <property type="project" value="TreeGrafter"/>
</dbReference>
<dbReference type="GO" id="GO:0019843">
    <property type="term" value="F:rRNA binding"/>
    <property type="evidence" value="ECO:0007669"/>
    <property type="project" value="UniProtKB-UniRule"/>
</dbReference>
<dbReference type="GO" id="GO:0003735">
    <property type="term" value="F:structural constituent of ribosome"/>
    <property type="evidence" value="ECO:0007669"/>
    <property type="project" value="InterPro"/>
</dbReference>
<dbReference type="GO" id="GO:0006412">
    <property type="term" value="P:translation"/>
    <property type="evidence" value="ECO:0007669"/>
    <property type="project" value="UniProtKB-UniRule"/>
</dbReference>
<dbReference type="Gene3D" id="3.100.10.10">
    <property type="match status" value="1"/>
</dbReference>
<dbReference type="Gene3D" id="4.10.990.10">
    <property type="match status" value="1"/>
</dbReference>
<dbReference type="HAMAP" id="MF_01341">
    <property type="entry name" value="Ribosomal_uL15"/>
    <property type="match status" value="1"/>
</dbReference>
<dbReference type="InterPro" id="IPR027386">
    <property type="entry name" value="Rbsml_uL15_N"/>
</dbReference>
<dbReference type="InterPro" id="IPR030878">
    <property type="entry name" value="Ribosomal_uL15"/>
</dbReference>
<dbReference type="InterPro" id="IPR021131">
    <property type="entry name" value="Ribosomal_uL15/eL18"/>
</dbReference>
<dbReference type="InterPro" id="IPR036227">
    <property type="entry name" value="Ribosomal_uL15/eL18_sf"/>
</dbReference>
<dbReference type="PANTHER" id="PTHR11721">
    <property type="entry name" value="60S RIBOSOMAL PROTEIN L27A"/>
    <property type="match status" value="1"/>
</dbReference>
<dbReference type="PANTHER" id="PTHR11721:SF3">
    <property type="entry name" value="LARGE RIBOSOMAL SUBUNIT PROTEIN UL15"/>
    <property type="match status" value="1"/>
</dbReference>
<dbReference type="Pfam" id="PF00828">
    <property type="entry name" value="Ribosomal_L27A"/>
    <property type="match status" value="1"/>
</dbReference>
<dbReference type="SUPFAM" id="SSF52080">
    <property type="entry name" value="Ribosomal proteins L15p and L18e"/>
    <property type="match status" value="1"/>
</dbReference>